<dbReference type="EMBL" id="CP000803">
    <property type="protein sequence ID" value="ABU60726.1"/>
    <property type="molecule type" value="Genomic_DNA"/>
</dbReference>
<dbReference type="RefSeq" id="WP_003021606.1">
    <property type="nucleotide sequence ID" value="NC_009749.1"/>
</dbReference>
<dbReference type="SMR" id="A7N9S3"/>
<dbReference type="GeneID" id="75264264"/>
<dbReference type="KEGG" id="fta:FTA_0249"/>
<dbReference type="HOGENOM" id="CLU_072226_1_1_6"/>
<dbReference type="GO" id="GO:0015935">
    <property type="term" value="C:small ribosomal subunit"/>
    <property type="evidence" value="ECO:0007669"/>
    <property type="project" value="InterPro"/>
</dbReference>
<dbReference type="GO" id="GO:0019843">
    <property type="term" value="F:rRNA binding"/>
    <property type="evidence" value="ECO:0007669"/>
    <property type="project" value="UniProtKB-UniRule"/>
</dbReference>
<dbReference type="GO" id="GO:0003735">
    <property type="term" value="F:structural constituent of ribosome"/>
    <property type="evidence" value="ECO:0007669"/>
    <property type="project" value="InterPro"/>
</dbReference>
<dbReference type="GO" id="GO:0000049">
    <property type="term" value="F:tRNA binding"/>
    <property type="evidence" value="ECO:0007669"/>
    <property type="project" value="UniProtKB-UniRule"/>
</dbReference>
<dbReference type="GO" id="GO:0006412">
    <property type="term" value="P:translation"/>
    <property type="evidence" value="ECO:0007669"/>
    <property type="project" value="UniProtKB-UniRule"/>
</dbReference>
<dbReference type="CDD" id="cd14869">
    <property type="entry name" value="uS7_Bacteria"/>
    <property type="match status" value="1"/>
</dbReference>
<dbReference type="FunFam" id="1.10.455.10:FF:000001">
    <property type="entry name" value="30S ribosomal protein S7"/>
    <property type="match status" value="1"/>
</dbReference>
<dbReference type="Gene3D" id="1.10.455.10">
    <property type="entry name" value="Ribosomal protein S7 domain"/>
    <property type="match status" value="1"/>
</dbReference>
<dbReference type="HAMAP" id="MF_00480_B">
    <property type="entry name" value="Ribosomal_uS7_B"/>
    <property type="match status" value="1"/>
</dbReference>
<dbReference type="InterPro" id="IPR000235">
    <property type="entry name" value="Ribosomal_uS7"/>
</dbReference>
<dbReference type="InterPro" id="IPR005717">
    <property type="entry name" value="Ribosomal_uS7_bac/org-type"/>
</dbReference>
<dbReference type="InterPro" id="IPR020606">
    <property type="entry name" value="Ribosomal_uS7_CS"/>
</dbReference>
<dbReference type="InterPro" id="IPR023798">
    <property type="entry name" value="Ribosomal_uS7_dom"/>
</dbReference>
<dbReference type="InterPro" id="IPR036823">
    <property type="entry name" value="Ribosomal_uS7_dom_sf"/>
</dbReference>
<dbReference type="NCBIfam" id="TIGR01029">
    <property type="entry name" value="rpsG_bact"/>
    <property type="match status" value="1"/>
</dbReference>
<dbReference type="PANTHER" id="PTHR11205">
    <property type="entry name" value="RIBOSOMAL PROTEIN S7"/>
    <property type="match status" value="1"/>
</dbReference>
<dbReference type="Pfam" id="PF00177">
    <property type="entry name" value="Ribosomal_S7"/>
    <property type="match status" value="1"/>
</dbReference>
<dbReference type="PIRSF" id="PIRSF002122">
    <property type="entry name" value="RPS7p_RPS7a_RPS5e_RPS7o"/>
    <property type="match status" value="1"/>
</dbReference>
<dbReference type="SUPFAM" id="SSF47973">
    <property type="entry name" value="Ribosomal protein S7"/>
    <property type="match status" value="1"/>
</dbReference>
<dbReference type="PROSITE" id="PS00052">
    <property type="entry name" value="RIBOSOMAL_S7"/>
    <property type="match status" value="1"/>
</dbReference>
<name>RS7_FRATF</name>
<protein>
    <recommendedName>
        <fullName evidence="1">Small ribosomal subunit protein uS7</fullName>
    </recommendedName>
    <alternativeName>
        <fullName evidence="2">30S ribosomal protein S7</fullName>
    </alternativeName>
</protein>
<accession>A7N9S3</accession>
<comment type="function">
    <text evidence="1">One of the primary rRNA binding proteins, it binds directly to 16S rRNA where it nucleates assembly of the head domain of the 30S subunit. Is located at the subunit interface close to the decoding center, probably blocks exit of the E-site tRNA.</text>
</comment>
<comment type="subunit">
    <text evidence="1">Part of the 30S ribosomal subunit. Contacts proteins S9 and S11.</text>
</comment>
<comment type="similarity">
    <text evidence="1">Belongs to the universal ribosomal protein uS7 family.</text>
</comment>
<proteinExistence type="inferred from homology"/>
<keyword id="KW-0687">Ribonucleoprotein</keyword>
<keyword id="KW-0689">Ribosomal protein</keyword>
<keyword id="KW-0694">RNA-binding</keyword>
<keyword id="KW-0699">rRNA-binding</keyword>
<keyword id="KW-0820">tRNA-binding</keyword>
<sequence length="157" mass="17808">MSRRNRAPKRDILPDPKYKSQVVAKFVNHIMLSGKKSIAEKIVYGAFDKIKAKDASANEVEVFEKALESVSPMVEVKSRRVGGATYQVPVEVRPERRQTLGMRWIIDAARKRKENTMGDRVAAEILEAVEGRGAAVKKREDTHKMAEANKAFAHFRW</sequence>
<feature type="chain" id="PRO_1000014194" description="Small ribosomal subunit protein uS7">
    <location>
        <begin position="1"/>
        <end position="157"/>
    </location>
</feature>
<gene>
    <name evidence="1" type="primary">rpsG</name>
    <name type="ordered locus">FTA_0249</name>
</gene>
<reference key="1">
    <citation type="journal article" date="2009" name="PLoS ONE">
        <title>Complete genome sequence of Francisella tularensis subspecies holarctica FTNF002-00.</title>
        <authorList>
            <person name="Barabote R.D."/>
            <person name="Xie G."/>
            <person name="Brettin T.S."/>
            <person name="Hinrichs S.H."/>
            <person name="Fey P.D."/>
            <person name="Jay J.J."/>
            <person name="Engle J.L."/>
            <person name="Godbole S.D."/>
            <person name="Noronha J.M."/>
            <person name="Scheuermann R.H."/>
            <person name="Zhou L.W."/>
            <person name="Lion C."/>
            <person name="Dempsey M.P."/>
        </authorList>
    </citation>
    <scope>NUCLEOTIDE SEQUENCE [LARGE SCALE GENOMIC DNA]</scope>
    <source>
        <strain>FTNF002-00 / FTA</strain>
    </source>
</reference>
<evidence type="ECO:0000255" key="1">
    <source>
        <dbReference type="HAMAP-Rule" id="MF_00480"/>
    </source>
</evidence>
<evidence type="ECO:0000305" key="2"/>
<organism>
    <name type="scientific">Francisella tularensis subsp. holarctica (strain FTNF002-00 / FTA)</name>
    <dbReference type="NCBI Taxonomy" id="458234"/>
    <lineage>
        <taxon>Bacteria</taxon>
        <taxon>Pseudomonadati</taxon>
        <taxon>Pseudomonadota</taxon>
        <taxon>Gammaproteobacteria</taxon>
        <taxon>Thiotrichales</taxon>
        <taxon>Francisellaceae</taxon>
        <taxon>Francisella</taxon>
    </lineage>
</organism>